<comment type="catalytic activity">
    <reaction evidence="1">
        <text>L-citrulline + L-aspartate + ATP = 2-(N(omega)-L-arginino)succinate + AMP + diphosphate + H(+)</text>
        <dbReference type="Rhea" id="RHEA:10932"/>
        <dbReference type="ChEBI" id="CHEBI:15378"/>
        <dbReference type="ChEBI" id="CHEBI:29991"/>
        <dbReference type="ChEBI" id="CHEBI:30616"/>
        <dbReference type="ChEBI" id="CHEBI:33019"/>
        <dbReference type="ChEBI" id="CHEBI:57472"/>
        <dbReference type="ChEBI" id="CHEBI:57743"/>
        <dbReference type="ChEBI" id="CHEBI:456215"/>
        <dbReference type="EC" id="6.3.4.5"/>
    </reaction>
</comment>
<comment type="pathway">
    <text evidence="1">Amino-acid biosynthesis; L-arginine biosynthesis; L-arginine from L-ornithine and carbamoyl phosphate: step 2/3.</text>
</comment>
<comment type="subunit">
    <text evidence="1">Homotetramer.</text>
</comment>
<comment type="subcellular location">
    <subcellularLocation>
        <location evidence="1">Cytoplasm</location>
    </subcellularLocation>
</comment>
<comment type="similarity">
    <text evidence="1">Belongs to the argininosuccinate synthase family. Type 1 subfamily.</text>
</comment>
<comment type="sequence caution" evidence="2">
    <conflict type="erroneous initiation">
        <sequence resource="EMBL-CDS" id="BAC95764"/>
    </conflict>
</comment>
<accession>Q7MH72</accession>
<evidence type="ECO:0000255" key="1">
    <source>
        <dbReference type="HAMAP-Rule" id="MF_00005"/>
    </source>
</evidence>
<evidence type="ECO:0000305" key="2"/>
<keyword id="KW-0028">Amino-acid biosynthesis</keyword>
<keyword id="KW-0055">Arginine biosynthesis</keyword>
<keyword id="KW-0067">ATP-binding</keyword>
<keyword id="KW-0963">Cytoplasm</keyword>
<keyword id="KW-0436">Ligase</keyword>
<keyword id="KW-0547">Nucleotide-binding</keyword>
<reference key="1">
    <citation type="journal article" date="2003" name="Genome Res.">
        <title>Comparative genome analysis of Vibrio vulnificus, a marine pathogen.</title>
        <authorList>
            <person name="Chen C.-Y."/>
            <person name="Wu K.-M."/>
            <person name="Chang Y.-C."/>
            <person name="Chang C.-H."/>
            <person name="Tsai H.-C."/>
            <person name="Liao T.-L."/>
            <person name="Liu Y.-M."/>
            <person name="Chen H.-J."/>
            <person name="Shen A.B.-T."/>
            <person name="Li J.-C."/>
            <person name="Su T.-L."/>
            <person name="Shao C.-P."/>
            <person name="Lee C.-T."/>
            <person name="Hor L.-I."/>
            <person name="Tsai S.-F."/>
        </authorList>
    </citation>
    <scope>NUCLEOTIDE SEQUENCE [LARGE SCALE GENOMIC DNA]</scope>
    <source>
        <strain>YJ016</strain>
    </source>
</reference>
<proteinExistence type="inferred from homology"/>
<dbReference type="EC" id="6.3.4.5" evidence="1"/>
<dbReference type="EMBL" id="BA000037">
    <property type="protein sequence ID" value="BAC95764.1"/>
    <property type="status" value="ALT_INIT"/>
    <property type="molecule type" value="Genomic_DNA"/>
</dbReference>
<dbReference type="RefSeq" id="WP_011079347.1">
    <property type="nucleotide sequence ID" value="NC_005139.1"/>
</dbReference>
<dbReference type="SMR" id="Q7MH72"/>
<dbReference type="STRING" id="672.VV93_v1c27280"/>
<dbReference type="KEGG" id="vvy:VV3000"/>
<dbReference type="eggNOG" id="COG0137">
    <property type="taxonomic scope" value="Bacteria"/>
</dbReference>
<dbReference type="HOGENOM" id="CLU_032784_4_2_6"/>
<dbReference type="UniPathway" id="UPA00068">
    <property type="reaction ID" value="UER00113"/>
</dbReference>
<dbReference type="Proteomes" id="UP000002675">
    <property type="component" value="Chromosome I"/>
</dbReference>
<dbReference type="GO" id="GO:0005737">
    <property type="term" value="C:cytoplasm"/>
    <property type="evidence" value="ECO:0007669"/>
    <property type="project" value="UniProtKB-SubCell"/>
</dbReference>
<dbReference type="GO" id="GO:0004055">
    <property type="term" value="F:argininosuccinate synthase activity"/>
    <property type="evidence" value="ECO:0007669"/>
    <property type="project" value="UniProtKB-UniRule"/>
</dbReference>
<dbReference type="GO" id="GO:0005524">
    <property type="term" value="F:ATP binding"/>
    <property type="evidence" value="ECO:0007669"/>
    <property type="project" value="UniProtKB-UniRule"/>
</dbReference>
<dbReference type="GO" id="GO:0000053">
    <property type="term" value="P:argininosuccinate metabolic process"/>
    <property type="evidence" value="ECO:0007669"/>
    <property type="project" value="TreeGrafter"/>
</dbReference>
<dbReference type="GO" id="GO:0006526">
    <property type="term" value="P:L-arginine biosynthetic process"/>
    <property type="evidence" value="ECO:0007669"/>
    <property type="project" value="UniProtKB-UniRule"/>
</dbReference>
<dbReference type="GO" id="GO:0000050">
    <property type="term" value="P:urea cycle"/>
    <property type="evidence" value="ECO:0007669"/>
    <property type="project" value="TreeGrafter"/>
</dbReference>
<dbReference type="CDD" id="cd01999">
    <property type="entry name" value="ASS"/>
    <property type="match status" value="1"/>
</dbReference>
<dbReference type="FunFam" id="3.40.50.620:FF:000019">
    <property type="entry name" value="Argininosuccinate synthase"/>
    <property type="match status" value="1"/>
</dbReference>
<dbReference type="FunFam" id="3.90.1260.10:FF:000007">
    <property type="entry name" value="Argininosuccinate synthase"/>
    <property type="match status" value="1"/>
</dbReference>
<dbReference type="Gene3D" id="3.90.1260.10">
    <property type="entry name" value="Argininosuccinate synthetase, chain A, domain 2"/>
    <property type="match status" value="1"/>
</dbReference>
<dbReference type="Gene3D" id="3.40.50.620">
    <property type="entry name" value="HUPs"/>
    <property type="match status" value="1"/>
</dbReference>
<dbReference type="Gene3D" id="1.20.5.470">
    <property type="entry name" value="Single helix bin"/>
    <property type="match status" value="1"/>
</dbReference>
<dbReference type="HAMAP" id="MF_00005">
    <property type="entry name" value="Arg_succ_synth_type1"/>
    <property type="match status" value="1"/>
</dbReference>
<dbReference type="InterPro" id="IPR048268">
    <property type="entry name" value="Arginosuc_syn_C"/>
</dbReference>
<dbReference type="InterPro" id="IPR048267">
    <property type="entry name" value="Arginosuc_syn_N"/>
</dbReference>
<dbReference type="InterPro" id="IPR001518">
    <property type="entry name" value="Arginosuc_synth"/>
</dbReference>
<dbReference type="InterPro" id="IPR018223">
    <property type="entry name" value="Arginosuc_synth_CS"/>
</dbReference>
<dbReference type="InterPro" id="IPR023434">
    <property type="entry name" value="Arginosuc_synth_type_1_subfam"/>
</dbReference>
<dbReference type="InterPro" id="IPR024074">
    <property type="entry name" value="AS_cat/multimer_dom_body"/>
</dbReference>
<dbReference type="InterPro" id="IPR014729">
    <property type="entry name" value="Rossmann-like_a/b/a_fold"/>
</dbReference>
<dbReference type="NCBIfam" id="TIGR00032">
    <property type="entry name" value="argG"/>
    <property type="match status" value="1"/>
</dbReference>
<dbReference type="NCBIfam" id="NF001770">
    <property type="entry name" value="PRK00509.1"/>
    <property type="match status" value="1"/>
</dbReference>
<dbReference type="PANTHER" id="PTHR11587">
    <property type="entry name" value="ARGININOSUCCINATE SYNTHASE"/>
    <property type="match status" value="1"/>
</dbReference>
<dbReference type="PANTHER" id="PTHR11587:SF2">
    <property type="entry name" value="ARGININOSUCCINATE SYNTHASE"/>
    <property type="match status" value="1"/>
</dbReference>
<dbReference type="Pfam" id="PF20979">
    <property type="entry name" value="Arginosuc_syn_C"/>
    <property type="match status" value="1"/>
</dbReference>
<dbReference type="Pfam" id="PF00764">
    <property type="entry name" value="Arginosuc_synth"/>
    <property type="match status" value="1"/>
</dbReference>
<dbReference type="SUPFAM" id="SSF52402">
    <property type="entry name" value="Adenine nucleotide alpha hydrolases-like"/>
    <property type="match status" value="1"/>
</dbReference>
<dbReference type="SUPFAM" id="SSF69864">
    <property type="entry name" value="Argininosuccinate synthetase, C-terminal domain"/>
    <property type="match status" value="1"/>
</dbReference>
<dbReference type="PROSITE" id="PS00564">
    <property type="entry name" value="ARGININOSUCCIN_SYN_1"/>
    <property type="match status" value="1"/>
</dbReference>
<dbReference type="PROSITE" id="PS00565">
    <property type="entry name" value="ARGININOSUCCIN_SYN_2"/>
    <property type="match status" value="1"/>
</dbReference>
<sequence>MSKLNVNKVVVAYSGGLDTSVIIPWLKENYDCEVVAFVADVGQGEEELVGIEEKAKASGASECYVVDLKEELVADYIYPTLKTGAYYEGKYLLGTSMARPVIAKAQVEIARKVGADALCHGCTGKGNDQVRFEGAFAALAPDLKVIAPWREWDLVSREQCLDYLAERNIPCAASLTKIYSRDANAWHISTEGGVLESTWNAPNEDCWVWTVDPEQAPNEAEYVTLQVEKGEVVAVDGEQMTPYNALVYLNEKGAKHGVGRIDIVENRLVGMKSRGCYETPGGTIMMEALRAVEQLVLDKTSFEFREELGLKASHLVYDGRWFTPLRKSIMAAADELAQDVNGEVVVKLYKGMATVTQKRSENSLYSEAFATFGEDEVYDQSHAGGFIRLYSLSSRIRALNSQK</sequence>
<gene>
    <name evidence="1" type="primary">argG</name>
    <name type="ordered locus">VV3000</name>
</gene>
<organism>
    <name type="scientific">Vibrio vulnificus (strain YJ016)</name>
    <dbReference type="NCBI Taxonomy" id="196600"/>
    <lineage>
        <taxon>Bacteria</taxon>
        <taxon>Pseudomonadati</taxon>
        <taxon>Pseudomonadota</taxon>
        <taxon>Gammaproteobacteria</taxon>
        <taxon>Vibrionales</taxon>
        <taxon>Vibrionaceae</taxon>
        <taxon>Vibrio</taxon>
    </lineage>
</organism>
<feature type="chain" id="PRO_0000148664" description="Argininosuccinate synthase">
    <location>
        <begin position="1"/>
        <end position="403"/>
    </location>
</feature>
<feature type="binding site" evidence="1">
    <location>
        <begin position="12"/>
        <end position="20"/>
    </location>
    <ligand>
        <name>ATP</name>
        <dbReference type="ChEBI" id="CHEBI:30616"/>
    </ligand>
</feature>
<feature type="binding site" evidence="1">
    <location>
        <position position="39"/>
    </location>
    <ligand>
        <name>ATP</name>
        <dbReference type="ChEBI" id="CHEBI:30616"/>
    </ligand>
</feature>
<feature type="binding site" evidence="1">
    <location>
        <position position="91"/>
    </location>
    <ligand>
        <name>L-citrulline</name>
        <dbReference type="ChEBI" id="CHEBI:57743"/>
    </ligand>
</feature>
<feature type="binding site" evidence="1">
    <location>
        <position position="96"/>
    </location>
    <ligand>
        <name>L-citrulline</name>
        <dbReference type="ChEBI" id="CHEBI:57743"/>
    </ligand>
</feature>
<feature type="binding site" evidence="1">
    <location>
        <position position="121"/>
    </location>
    <ligand>
        <name>ATP</name>
        <dbReference type="ChEBI" id="CHEBI:30616"/>
    </ligand>
</feature>
<feature type="binding site" evidence="1">
    <location>
        <position position="123"/>
    </location>
    <ligand>
        <name>L-aspartate</name>
        <dbReference type="ChEBI" id="CHEBI:29991"/>
    </ligand>
</feature>
<feature type="binding site" evidence="1">
    <location>
        <position position="127"/>
    </location>
    <ligand>
        <name>L-aspartate</name>
        <dbReference type="ChEBI" id="CHEBI:29991"/>
    </ligand>
</feature>
<feature type="binding site" evidence="1">
    <location>
        <position position="127"/>
    </location>
    <ligand>
        <name>L-citrulline</name>
        <dbReference type="ChEBI" id="CHEBI:57743"/>
    </ligand>
</feature>
<feature type="binding site" evidence="1">
    <location>
        <position position="128"/>
    </location>
    <ligand>
        <name>L-aspartate</name>
        <dbReference type="ChEBI" id="CHEBI:29991"/>
    </ligand>
</feature>
<feature type="binding site" evidence="1">
    <location>
        <position position="131"/>
    </location>
    <ligand>
        <name>L-citrulline</name>
        <dbReference type="ChEBI" id="CHEBI:57743"/>
    </ligand>
</feature>
<feature type="binding site" evidence="1">
    <location>
        <position position="180"/>
    </location>
    <ligand>
        <name>L-citrulline</name>
        <dbReference type="ChEBI" id="CHEBI:57743"/>
    </ligand>
</feature>
<feature type="binding site" evidence="1">
    <location>
        <position position="189"/>
    </location>
    <ligand>
        <name>L-citrulline</name>
        <dbReference type="ChEBI" id="CHEBI:57743"/>
    </ligand>
</feature>
<feature type="binding site" evidence="1">
    <location>
        <position position="265"/>
    </location>
    <ligand>
        <name>L-citrulline</name>
        <dbReference type="ChEBI" id="CHEBI:57743"/>
    </ligand>
</feature>
<feature type="binding site" evidence="1">
    <location>
        <position position="277"/>
    </location>
    <ligand>
        <name>L-citrulline</name>
        <dbReference type="ChEBI" id="CHEBI:57743"/>
    </ligand>
</feature>
<name>ASSY_VIBVY</name>
<protein>
    <recommendedName>
        <fullName evidence="1">Argininosuccinate synthase</fullName>
        <ecNumber evidence="1">6.3.4.5</ecNumber>
    </recommendedName>
    <alternativeName>
        <fullName evidence="1">Citrulline--aspartate ligase</fullName>
    </alternativeName>
</protein>